<reference key="1">
    <citation type="journal article" date="2001" name="Proc. Natl. Acad. Sci. U.S.A.">
        <title>Complete genomic sequence of Pasteurella multocida Pm70.</title>
        <authorList>
            <person name="May B.J."/>
            <person name="Zhang Q."/>
            <person name="Li L.L."/>
            <person name="Paustian M.L."/>
            <person name="Whittam T.S."/>
            <person name="Kapur V."/>
        </authorList>
    </citation>
    <scope>NUCLEOTIDE SEQUENCE [LARGE SCALE GENOMIC DNA]</scope>
    <source>
        <strain>Pm70</strain>
    </source>
</reference>
<protein>
    <recommendedName>
        <fullName evidence="1">Exodeoxyribonuclease 7 large subunit</fullName>
        <ecNumber evidence="1">3.1.11.6</ecNumber>
    </recommendedName>
    <alternativeName>
        <fullName evidence="1">Exodeoxyribonuclease VII large subunit</fullName>
        <shortName evidence="1">Exonuclease VII large subunit</shortName>
    </alternativeName>
</protein>
<comment type="function">
    <text evidence="1">Bidirectionally degrades single-stranded DNA into large acid-insoluble oligonucleotides, which are then degraded further into small acid-soluble oligonucleotides.</text>
</comment>
<comment type="catalytic activity">
    <reaction evidence="1">
        <text>Exonucleolytic cleavage in either 5'- to 3'- or 3'- to 5'-direction to yield nucleoside 5'-phosphates.</text>
        <dbReference type="EC" id="3.1.11.6"/>
    </reaction>
</comment>
<comment type="subunit">
    <text evidence="1">Heterooligomer composed of large and small subunits.</text>
</comment>
<comment type="subcellular location">
    <subcellularLocation>
        <location evidence="1">Cytoplasm</location>
    </subcellularLocation>
</comment>
<comment type="similarity">
    <text evidence="1">Belongs to the XseA family.</text>
</comment>
<gene>
    <name evidence="1" type="primary">xseA</name>
    <name type="ordered locus">PM0168</name>
</gene>
<proteinExistence type="inferred from homology"/>
<accession>Q9CP86</accession>
<name>EX7L_PASMU</name>
<feature type="chain" id="PRO_0000197865" description="Exodeoxyribonuclease 7 large subunit">
    <location>
        <begin position="1"/>
        <end position="445"/>
    </location>
</feature>
<evidence type="ECO:0000255" key="1">
    <source>
        <dbReference type="HAMAP-Rule" id="MF_00378"/>
    </source>
</evidence>
<dbReference type="EC" id="3.1.11.6" evidence="1"/>
<dbReference type="EMBL" id="AE004439">
    <property type="protein sequence ID" value="AAK02252.1"/>
    <property type="molecule type" value="Genomic_DNA"/>
</dbReference>
<dbReference type="RefSeq" id="WP_010906514.1">
    <property type="nucleotide sequence ID" value="NC_002663.1"/>
</dbReference>
<dbReference type="SMR" id="Q9CP86"/>
<dbReference type="STRING" id="272843.PM0168"/>
<dbReference type="EnsemblBacteria" id="AAK02252">
    <property type="protein sequence ID" value="AAK02252"/>
    <property type="gene ID" value="PM0168"/>
</dbReference>
<dbReference type="KEGG" id="pmu:PM0168"/>
<dbReference type="PATRIC" id="fig|272843.6.peg.173"/>
<dbReference type="HOGENOM" id="CLU_023625_3_1_6"/>
<dbReference type="OrthoDB" id="9802795at2"/>
<dbReference type="Proteomes" id="UP000000809">
    <property type="component" value="Chromosome"/>
</dbReference>
<dbReference type="GO" id="GO:0005737">
    <property type="term" value="C:cytoplasm"/>
    <property type="evidence" value="ECO:0007669"/>
    <property type="project" value="UniProtKB-SubCell"/>
</dbReference>
<dbReference type="GO" id="GO:0009318">
    <property type="term" value="C:exodeoxyribonuclease VII complex"/>
    <property type="evidence" value="ECO:0007669"/>
    <property type="project" value="InterPro"/>
</dbReference>
<dbReference type="GO" id="GO:0008855">
    <property type="term" value="F:exodeoxyribonuclease VII activity"/>
    <property type="evidence" value="ECO:0007669"/>
    <property type="project" value="UniProtKB-UniRule"/>
</dbReference>
<dbReference type="GO" id="GO:0003676">
    <property type="term" value="F:nucleic acid binding"/>
    <property type="evidence" value="ECO:0007669"/>
    <property type="project" value="InterPro"/>
</dbReference>
<dbReference type="GO" id="GO:0006308">
    <property type="term" value="P:DNA catabolic process"/>
    <property type="evidence" value="ECO:0007669"/>
    <property type="project" value="UniProtKB-UniRule"/>
</dbReference>
<dbReference type="CDD" id="cd04489">
    <property type="entry name" value="ExoVII_LU_OBF"/>
    <property type="match status" value="1"/>
</dbReference>
<dbReference type="HAMAP" id="MF_00378">
    <property type="entry name" value="Exonuc_7_L"/>
    <property type="match status" value="1"/>
</dbReference>
<dbReference type="InterPro" id="IPR003753">
    <property type="entry name" value="Exonuc_VII_L"/>
</dbReference>
<dbReference type="InterPro" id="IPR020579">
    <property type="entry name" value="Exonuc_VII_lsu_C"/>
</dbReference>
<dbReference type="InterPro" id="IPR025824">
    <property type="entry name" value="OB-fold_nuc-bd_dom"/>
</dbReference>
<dbReference type="NCBIfam" id="TIGR00237">
    <property type="entry name" value="xseA"/>
    <property type="match status" value="1"/>
</dbReference>
<dbReference type="PANTHER" id="PTHR30008">
    <property type="entry name" value="EXODEOXYRIBONUCLEASE 7 LARGE SUBUNIT"/>
    <property type="match status" value="1"/>
</dbReference>
<dbReference type="PANTHER" id="PTHR30008:SF0">
    <property type="entry name" value="EXODEOXYRIBONUCLEASE 7 LARGE SUBUNIT"/>
    <property type="match status" value="1"/>
</dbReference>
<dbReference type="Pfam" id="PF02601">
    <property type="entry name" value="Exonuc_VII_L"/>
    <property type="match status" value="1"/>
</dbReference>
<dbReference type="Pfam" id="PF13742">
    <property type="entry name" value="tRNA_anti_2"/>
    <property type="match status" value="1"/>
</dbReference>
<keyword id="KW-0963">Cytoplasm</keyword>
<keyword id="KW-0269">Exonuclease</keyword>
<keyword id="KW-0378">Hydrolase</keyword>
<keyword id="KW-0540">Nuclease</keyword>
<keyword id="KW-1185">Reference proteome</keyword>
<organism>
    <name type="scientific">Pasteurella multocida (strain Pm70)</name>
    <dbReference type="NCBI Taxonomy" id="272843"/>
    <lineage>
        <taxon>Bacteria</taxon>
        <taxon>Pseudomonadati</taxon>
        <taxon>Pseudomonadota</taxon>
        <taxon>Gammaproteobacteria</taxon>
        <taxon>Pasteurellales</taxon>
        <taxon>Pasteurellaceae</taxon>
        <taxon>Pasteurella</taxon>
    </lineage>
</organism>
<sequence length="445" mass="50596">MSEHIYSVSQLNQTVRVMLENQLRQVWLTGEISNFTQPVSGHWYLTLKDENAQVRCAMFRMKNMRVSFRPQNGMQVLVHASVSLYEPRGDYQLIIESMHPAGEGLLQQQFEALKMQLAAEGLFAQHLKKSLPPFCKSVGIVTSQTGAALQDILQILRRRDPSLQVVIYPTAVQGKEASAEIVQMIELANRRQEVDALIVGRGGGSLEDLWCFNEEMVARAIFHSQLPIISAVGHETDVTIADFVADLRAPTPSAAAELVSRDQQALLQQLVYQRQRLEMALDRLFKQKDDRLQRLRLRLHNQHPQRQLSAQKQLMQQLAHRLDWSMQAVLQQKQAQLRVLWARVEKNPLPFTLQKQKQDLAQLKVRLDVALKRELTFKHHQFAALCTKLDSISPLKVFARGYSIAQNAQGVAITQLKQVSVGERVITRLADGEIVSQVTDLRPRS</sequence>